<evidence type="ECO:0000255" key="1">
    <source>
        <dbReference type="HAMAP-Rule" id="MF_01187"/>
    </source>
</evidence>
<accession>Q8XEM5</accession>
<accession>Q7AN73</accession>
<proteinExistence type="inferred from homology"/>
<dbReference type="EMBL" id="AE014613">
    <property type="protein sequence ID" value="AAO69562.1"/>
    <property type="molecule type" value="Genomic_DNA"/>
</dbReference>
<dbReference type="EMBL" id="AL513382">
    <property type="protein sequence ID" value="CAD05387.1"/>
    <property type="molecule type" value="Genomic_DNA"/>
</dbReference>
<dbReference type="RefSeq" id="NP_455473.1">
    <property type="nucleotide sequence ID" value="NC_003198.1"/>
</dbReference>
<dbReference type="RefSeq" id="WP_000350061.1">
    <property type="nucleotide sequence ID" value="NZ_WSUR01000013.1"/>
</dbReference>
<dbReference type="SMR" id="Q8XEM5"/>
<dbReference type="STRING" id="220341.gene:17584978"/>
<dbReference type="KEGG" id="stt:t1947"/>
<dbReference type="KEGG" id="sty:STY0989"/>
<dbReference type="PATRIC" id="fig|220341.7.peg.997"/>
<dbReference type="eggNOG" id="COG2835">
    <property type="taxonomic scope" value="Bacteria"/>
</dbReference>
<dbReference type="HOGENOM" id="CLU_155659_3_1_6"/>
<dbReference type="OMA" id="ELICHAD"/>
<dbReference type="OrthoDB" id="9812205at2"/>
<dbReference type="Proteomes" id="UP000000541">
    <property type="component" value="Chromosome"/>
</dbReference>
<dbReference type="Proteomes" id="UP000002670">
    <property type="component" value="Chromosome"/>
</dbReference>
<dbReference type="GO" id="GO:0005829">
    <property type="term" value="C:cytosol"/>
    <property type="evidence" value="ECO:0007669"/>
    <property type="project" value="TreeGrafter"/>
</dbReference>
<dbReference type="FunFam" id="2.20.25.10:FF:000002">
    <property type="entry name" value="UPF0434 protein YcaR"/>
    <property type="match status" value="1"/>
</dbReference>
<dbReference type="Gene3D" id="2.20.25.10">
    <property type="match status" value="1"/>
</dbReference>
<dbReference type="HAMAP" id="MF_01187">
    <property type="entry name" value="UPF0434"/>
    <property type="match status" value="1"/>
</dbReference>
<dbReference type="InterPro" id="IPR005651">
    <property type="entry name" value="Trm112-like"/>
</dbReference>
<dbReference type="NCBIfam" id="NF008806">
    <property type="entry name" value="PRK11827.1"/>
    <property type="match status" value="1"/>
</dbReference>
<dbReference type="PANTHER" id="PTHR33505:SF4">
    <property type="entry name" value="PROTEIN PREY, MITOCHONDRIAL"/>
    <property type="match status" value="1"/>
</dbReference>
<dbReference type="PANTHER" id="PTHR33505">
    <property type="entry name" value="ZGC:162634"/>
    <property type="match status" value="1"/>
</dbReference>
<dbReference type="Pfam" id="PF03966">
    <property type="entry name" value="Trm112p"/>
    <property type="match status" value="1"/>
</dbReference>
<dbReference type="SUPFAM" id="SSF158997">
    <property type="entry name" value="Trm112p-like"/>
    <property type="match status" value="1"/>
</dbReference>
<feature type="chain" id="PRO_0000291160" description="UPF0434 protein YcaR">
    <location>
        <begin position="1"/>
        <end position="60"/>
    </location>
</feature>
<name>YCAR_SALTI</name>
<comment type="similarity">
    <text evidence="1">Belongs to the UPF0434 family.</text>
</comment>
<organism>
    <name type="scientific">Salmonella typhi</name>
    <dbReference type="NCBI Taxonomy" id="90370"/>
    <lineage>
        <taxon>Bacteria</taxon>
        <taxon>Pseudomonadati</taxon>
        <taxon>Pseudomonadota</taxon>
        <taxon>Gammaproteobacteria</taxon>
        <taxon>Enterobacterales</taxon>
        <taxon>Enterobacteriaceae</taxon>
        <taxon>Salmonella</taxon>
    </lineage>
</organism>
<reference key="1">
    <citation type="journal article" date="2003" name="J. Bacteriol.">
        <title>Comparative genomics of Salmonella enterica serovar Typhi strains Ty2 and CT18.</title>
        <authorList>
            <person name="Deng W."/>
            <person name="Liou S.-R."/>
            <person name="Plunkett G. III"/>
            <person name="Mayhew G.F."/>
            <person name="Rose D.J."/>
            <person name="Burland V."/>
            <person name="Kodoyianni V."/>
            <person name="Schwartz D.C."/>
            <person name="Blattner F.R."/>
        </authorList>
    </citation>
    <scope>NUCLEOTIDE SEQUENCE [LARGE SCALE GENOMIC DNA]</scope>
    <source>
        <strain>ATCC 700931 / Ty2</strain>
    </source>
</reference>
<reference key="2">
    <citation type="journal article" date="2001" name="Nature">
        <title>Complete genome sequence of a multiple drug resistant Salmonella enterica serovar Typhi CT18.</title>
        <authorList>
            <person name="Parkhill J."/>
            <person name="Dougan G."/>
            <person name="James K.D."/>
            <person name="Thomson N.R."/>
            <person name="Pickard D."/>
            <person name="Wain J."/>
            <person name="Churcher C.M."/>
            <person name="Mungall K.L."/>
            <person name="Bentley S.D."/>
            <person name="Holden M.T.G."/>
            <person name="Sebaihia M."/>
            <person name="Baker S."/>
            <person name="Basham D."/>
            <person name="Brooks K."/>
            <person name="Chillingworth T."/>
            <person name="Connerton P."/>
            <person name="Cronin A."/>
            <person name="Davis P."/>
            <person name="Davies R.M."/>
            <person name="Dowd L."/>
            <person name="White N."/>
            <person name="Farrar J."/>
            <person name="Feltwell T."/>
            <person name="Hamlin N."/>
            <person name="Haque A."/>
            <person name="Hien T.T."/>
            <person name="Holroyd S."/>
            <person name="Jagels K."/>
            <person name="Krogh A."/>
            <person name="Larsen T.S."/>
            <person name="Leather S."/>
            <person name="Moule S."/>
            <person name="O'Gaora P."/>
            <person name="Parry C."/>
            <person name="Quail M.A."/>
            <person name="Rutherford K.M."/>
            <person name="Simmonds M."/>
            <person name="Skelton J."/>
            <person name="Stevens K."/>
            <person name="Whitehead S."/>
            <person name="Barrell B.G."/>
        </authorList>
    </citation>
    <scope>NUCLEOTIDE SEQUENCE [LARGE SCALE GENOMIC DNA]</scope>
    <source>
        <strain>CT18</strain>
    </source>
</reference>
<protein>
    <recommendedName>
        <fullName evidence="1">UPF0434 protein YcaR</fullName>
    </recommendedName>
</protein>
<sequence>MDHRLLEIIACPVCNGKLWYNQEQQELICKLDNLAFPLRDGIPVLLENEARALTSDESKS</sequence>
<gene>
    <name evidence="1" type="primary">ycaR</name>
    <name type="ordered locus">STY0989</name>
    <name type="ordered locus">t1947</name>
</gene>